<name>TSGA_BUCAI</name>
<proteinExistence type="inferred from homology"/>
<keyword id="KW-1003">Cell membrane</keyword>
<keyword id="KW-0472">Membrane</keyword>
<keyword id="KW-1185">Reference proteome</keyword>
<keyword id="KW-0812">Transmembrane</keyword>
<keyword id="KW-1133">Transmembrane helix</keyword>
<feature type="chain" id="PRO_0000206491" description="Protein TsgA homolog">
    <location>
        <begin position="1"/>
        <end position="388"/>
    </location>
</feature>
<feature type="transmembrane region" description="Helical" evidence="1">
    <location>
        <begin position="11"/>
        <end position="31"/>
    </location>
</feature>
<feature type="transmembrane region" description="Helical" evidence="1">
    <location>
        <begin position="50"/>
        <end position="70"/>
    </location>
</feature>
<feature type="transmembrane region" description="Helical" evidence="1">
    <location>
        <begin position="77"/>
        <end position="97"/>
    </location>
</feature>
<feature type="transmembrane region" description="Helical" evidence="1">
    <location>
        <begin position="101"/>
        <end position="121"/>
    </location>
</feature>
<feature type="transmembrane region" description="Helical" evidence="1">
    <location>
        <begin position="133"/>
        <end position="153"/>
    </location>
</feature>
<feature type="transmembrane region" description="Helical" evidence="1">
    <location>
        <begin position="160"/>
        <end position="180"/>
    </location>
</feature>
<feature type="transmembrane region" description="Helical" evidence="1">
    <location>
        <begin position="206"/>
        <end position="226"/>
    </location>
</feature>
<feature type="transmembrane region" description="Helical" evidence="1">
    <location>
        <begin position="244"/>
        <end position="264"/>
    </location>
</feature>
<feature type="transmembrane region" description="Helical" evidence="1">
    <location>
        <begin position="268"/>
        <end position="288"/>
    </location>
</feature>
<feature type="transmembrane region" description="Helical" evidence="1">
    <location>
        <begin position="298"/>
        <end position="318"/>
    </location>
</feature>
<feature type="transmembrane region" description="Helical" evidence="1">
    <location>
        <begin position="332"/>
        <end position="352"/>
    </location>
</feature>
<feature type="transmembrane region" description="Helical" evidence="1">
    <location>
        <begin position="360"/>
        <end position="380"/>
    </location>
</feature>
<reference key="1">
    <citation type="journal article" date="2000" name="Nature">
        <title>Genome sequence of the endocellular bacterial symbiont of aphids Buchnera sp. APS.</title>
        <authorList>
            <person name="Shigenobu S."/>
            <person name="Watanabe H."/>
            <person name="Hattori M."/>
            <person name="Sakaki Y."/>
            <person name="Ishikawa H."/>
        </authorList>
    </citation>
    <scope>NUCLEOTIDE SEQUENCE [LARGE SCALE GENOMIC DNA]</scope>
    <source>
        <strain>APS</strain>
    </source>
</reference>
<sequence>MTNINRIGLTWISFLSYAFTGALVVVTGMIMGNISNYFHLSISQMSNIFTFLNAGILVSIFINSWLIEIISLKKQLIFSFILTIIAVIGIVLCNSIFLFSINMFILGLVSGITMSIGTFIITHLYSGSKRGSLLLLTDSFFSMSGMIFPIVTAYLLEKKIIWYWSYICIGAIYLLIFLLTINSSFEKFKTNTKNSKETKEKWNFNVFLLSISALLYILGQLGFISWVPQYATEIMNIDIKKTGSLVSGFWMSYMLGMWFFSFIIKFFNLYRMFIFLTSMSTILMYCFIKSENFLNQQYIIISLGFFSSAIYTIIITLASLQTKHPSPKLINLILLFGTIGTFLTFIITSPIVEAKGLYVTLISSNILYGIVFFLSILIYFNKKYERVI</sequence>
<gene>
    <name evidence="1" type="primary">tsgA</name>
    <name type="ordered locus">BU535</name>
</gene>
<organism>
    <name type="scientific">Buchnera aphidicola subsp. Acyrthosiphon pisum (strain APS)</name>
    <name type="common">Acyrthosiphon pisum symbiotic bacterium</name>
    <dbReference type="NCBI Taxonomy" id="107806"/>
    <lineage>
        <taxon>Bacteria</taxon>
        <taxon>Pseudomonadati</taxon>
        <taxon>Pseudomonadota</taxon>
        <taxon>Gammaproteobacteria</taxon>
        <taxon>Enterobacterales</taxon>
        <taxon>Erwiniaceae</taxon>
        <taxon>Buchnera</taxon>
    </lineage>
</organism>
<comment type="subcellular location">
    <subcellularLocation>
        <location evidence="1">Cell membrane</location>
        <topology evidence="1">Multi-pass membrane protein</topology>
    </subcellularLocation>
</comment>
<comment type="similarity">
    <text evidence="1">Belongs to the major facilitator superfamily. TsgA family.</text>
</comment>
<protein>
    <recommendedName>
        <fullName evidence="1">Protein TsgA homolog</fullName>
    </recommendedName>
</protein>
<accession>P57601</accession>
<evidence type="ECO:0000255" key="1">
    <source>
        <dbReference type="HAMAP-Rule" id="MF_01044"/>
    </source>
</evidence>
<dbReference type="EMBL" id="BA000003">
    <property type="protein sequence ID" value="BAB13228.1"/>
    <property type="molecule type" value="Genomic_DNA"/>
</dbReference>
<dbReference type="RefSeq" id="NP_240342.1">
    <property type="nucleotide sequence ID" value="NC_002528.1"/>
</dbReference>
<dbReference type="RefSeq" id="WP_009874486.1">
    <property type="nucleotide sequence ID" value="NC_002528.1"/>
</dbReference>
<dbReference type="SMR" id="P57601"/>
<dbReference type="STRING" id="563178.BUAP5A_528"/>
<dbReference type="EnsemblBacteria" id="BAB13228">
    <property type="protein sequence ID" value="BAB13228"/>
    <property type="gene ID" value="BAB13228"/>
</dbReference>
<dbReference type="KEGG" id="buc:BU535"/>
<dbReference type="PATRIC" id="fig|107806.10.peg.540"/>
<dbReference type="eggNOG" id="COG0738">
    <property type="taxonomic scope" value="Bacteria"/>
</dbReference>
<dbReference type="HOGENOM" id="CLU_056916_0_0_6"/>
<dbReference type="Proteomes" id="UP000001806">
    <property type="component" value="Chromosome"/>
</dbReference>
<dbReference type="GO" id="GO:0005886">
    <property type="term" value="C:plasma membrane"/>
    <property type="evidence" value="ECO:0007669"/>
    <property type="project" value="UniProtKB-SubCell"/>
</dbReference>
<dbReference type="GO" id="GO:0022857">
    <property type="term" value="F:transmembrane transporter activity"/>
    <property type="evidence" value="ECO:0007669"/>
    <property type="project" value="InterPro"/>
</dbReference>
<dbReference type="Gene3D" id="1.20.1250.20">
    <property type="entry name" value="MFS general substrate transporter like domains"/>
    <property type="match status" value="2"/>
</dbReference>
<dbReference type="HAMAP" id="MF_01044">
    <property type="entry name" value="MFS_TsgA"/>
    <property type="match status" value="1"/>
</dbReference>
<dbReference type="InterPro" id="IPR011701">
    <property type="entry name" value="MFS"/>
</dbReference>
<dbReference type="InterPro" id="IPR020846">
    <property type="entry name" value="MFS_dom"/>
</dbReference>
<dbReference type="InterPro" id="IPR036259">
    <property type="entry name" value="MFS_trans_sf"/>
</dbReference>
<dbReference type="InterPro" id="IPR023528">
    <property type="entry name" value="MFS_TsgA"/>
</dbReference>
<dbReference type="InterPro" id="IPR050375">
    <property type="entry name" value="MFS_TsgA-like"/>
</dbReference>
<dbReference type="NCBIfam" id="NF002982">
    <property type="entry name" value="PRK03699.1"/>
    <property type="match status" value="1"/>
</dbReference>
<dbReference type="PANTHER" id="PTHR43702">
    <property type="entry name" value="L-FUCOSE-PROTON SYMPORTER"/>
    <property type="match status" value="1"/>
</dbReference>
<dbReference type="PANTHER" id="PTHR43702:SF3">
    <property type="entry name" value="PROTEIN TSGA"/>
    <property type="match status" value="1"/>
</dbReference>
<dbReference type="Pfam" id="PF07690">
    <property type="entry name" value="MFS_1"/>
    <property type="match status" value="1"/>
</dbReference>
<dbReference type="SUPFAM" id="SSF103473">
    <property type="entry name" value="MFS general substrate transporter"/>
    <property type="match status" value="1"/>
</dbReference>
<dbReference type="PROSITE" id="PS50850">
    <property type="entry name" value="MFS"/>
    <property type="match status" value="1"/>
</dbReference>